<organism>
    <name type="scientific">Pseudomonas aeruginosa (strain ATCC 15692 / DSM 22644 / CIP 104116 / JCM 14847 / LMG 12228 / 1C / PRS 101 / PAO1)</name>
    <dbReference type="NCBI Taxonomy" id="208964"/>
    <lineage>
        <taxon>Bacteria</taxon>
        <taxon>Pseudomonadati</taxon>
        <taxon>Pseudomonadota</taxon>
        <taxon>Gammaproteobacteria</taxon>
        <taxon>Pseudomonadales</taxon>
        <taxon>Pseudomonadaceae</taxon>
        <taxon>Pseudomonas</taxon>
    </lineage>
</organism>
<name>URED_PSEAE</name>
<accession>Q9HUU9</accession>
<sequence length="280" mass="30759">MTAALPDLSFHPAWHAQLELAYARAGDATRPVTRRHAGPLRVQKHLYAEGPEVCQHILVHPPGGIAGGDSLAFDVRLGERAWAQLTSPGAAKWYRAACPARQTLEIHLEPGATLEWLPQESIVFAGAQAELETRIQLRGDARLFYWDMVALGRPASGERFASGHFVAALDIRRDDRLLWHERQRIDGGDRLLDSPIGLAGHPVLATLVASGEIDTDLLQRCRALPCAGRGNLSQLPGGLLVARCLADEALHARAWLIELWRLLRPALLGREAVPPRIWST</sequence>
<gene>
    <name evidence="1" type="primary">ureD</name>
    <name type="ordered locus">PA4864</name>
</gene>
<proteinExistence type="inferred from homology"/>
<reference key="1">
    <citation type="journal article" date="2000" name="Nature">
        <title>Complete genome sequence of Pseudomonas aeruginosa PAO1, an opportunistic pathogen.</title>
        <authorList>
            <person name="Stover C.K."/>
            <person name="Pham X.-Q.T."/>
            <person name="Erwin A.L."/>
            <person name="Mizoguchi S.D."/>
            <person name="Warrener P."/>
            <person name="Hickey M.J."/>
            <person name="Brinkman F.S.L."/>
            <person name="Hufnagle W.O."/>
            <person name="Kowalik D.J."/>
            <person name="Lagrou M."/>
            <person name="Garber R.L."/>
            <person name="Goltry L."/>
            <person name="Tolentino E."/>
            <person name="Westbrock-Wadman S."/>
            <person name="Yuan Y."/>
            <person name="Brody L.L."/>
            <person name="Coulter S.N."/>
            <person name="Folger K.R."/>
            <person name="Kas A."/>
            <person name="Larbig K."/>
            <person name="Lim R.M."/>
            <person name="Smith K.A."/>
            <person name="Spencer D.H."/>
            <person name="Wong G.K.-S."/>
            <person name="Wu Z."/>
            <person name="Paulsen I.T."/>
            <person name="Reizer J."/>
            <person name="Saier M.H. Jr."/>
            <person name="Hancock R.E.W."/>
            <person name="Lory S."/>
            <person name="Olson M.V."/>
        </authorList>
    </citation>
    <scope>NUCLEOTIDE SEQUENCE [LARGE SCALE GENOMIC DNA]</scope>
    <source>
        <strain>ATCC 15692 / DSM 22644 / CIP 104116 / JCM 14847 / LMG 12228 / 1C / PRS 101 / PAO1</strain>
    </source>
</reference>
<keyword id="KW-0143">Chaperone</keyword>
<keyword id="KW-0963">Cytoplasm</keyword>
<keyword id="KW-0996">Nickel insertion</keyword>
<keyword id="KW-1185">Reference proteome</keyword>
<dbReference type="EMBL" id="AE004091">
    <property type="protein sequence ID" value="AAG08249.1"/>
    <property type="molecule type" value="Genomic_DNA"/>
</dbReference>
<dbReference type="PIR" id="D83037">
    <property type="entry name" value="D83037"/>
</dbReference>
<dbReference type="RefSeq" id="NP_253551.1">
    <property type="nucleotide sequence ID" value="NC_002516.2"/>
</dbReference>
<dbReference type="RefSeq" id="WP_003112316.1">
    <property type="nucleotide sequence ID" value="NZ_QZGE01000002.1"/>
</dbReference>
<dbReference type="SMR" id="Q9HUU9"/>
<dbReference type="STRING" id="208964.PA4864"/>
<dbReference type="PaxDb" id="208964-PA4864"/>
<dbReference type="GeneID" id="879776"/>
<dbReference type="KEGG" id="pae:PA4864"/>
<dbReference type="PATRIC" id="fig|208964.12.peg.5097"/>
<dbReference type="PseudoCAP" id="PA4864"/>
<dbReference type="HOGENOM" id="CLU_056339_0_0_6"/>
<dbReference type="InParanoid" id="Q9HUU9"/>
<dbReference type="OrthoDB" id="9798842at2"/>
<dbReference type="PhylomeDB" id="Q9HUU9"/>
<dbReference type="BioCyc" id="PAER208964:G1FZ6-4978-MONOMER"/>
<dbReference type="Proteomes" id="UP000002438">
    <property type="component" value="Chromosome"/>
</dbReference>
<dbReference type="GO" id="GO:0005737">
    <property type="term" value="C:cytoplasm"/>
    <property type="evidence" value="ECO:0007669"/>
    <property type="project" value="UniProtKB-SubCell"/>
</dbReference>
<dbReference type="GO" id="GO:0016151">
    <property type="term" value="F:nickel cation binding"/>
    <property type="evidence" value="ECO:0007669"/>
    <property type="project" value="UniProtKB-UniRule"/>
</dbReference>
<dbReference type="HAMAP" id="MF_01384">
    <property type="entry name" value="UreD"/>
    <property type="match status" value="1"/>
</dbReference>
<dbReference type="InterPro" id="IPR002669">
    <property type="entry name" value="UreD"/>
</dbReference>
<dbReference type="PANTHER" id="PTHR33643">
    <property type="entry name" value="UREASE ACCESSORY PROTEIN D"/>
    <property type="match status" value="1"/>
</dbReference>
<dbReference type="PANTHER" id="PTHR33643:SF1">
    <property type="entry name" value="UREASE ACCESSORY PROTEIN D"/>
    <property type="match status" value="1"/>
</dbReference>
<dbReference type="Pfam" id="PF01774">
    <property type="entry name" value="UreD"/>
    <property type="match status" value="1"/>
</dbReference>
<feature type="chain" id="PRO_0000287731" description="Urease accessory protein UreD">
    <location>
        <begin position="1"/>
        <end position="280"/>
    </location>
</feature>
<protein>
    <recommendedName>
        <fullName evidence="1">Urease accessory protein UreD</fullName>
    </recommendedName>
</protein>
<comment type="function">
    <text evidence="1">Required for maturation of urease via the functional incorporation of the urease nickel metallocenter.</text>
</comment>
<comment type="subunit">
    <text evidence="1">UreD, UreF and UreG form a complex that acts as a GTP-hydrolysis-dependent molecular chaperone, activating the urease apoprotein by helping to assemble the nickel containing metallocenter of UreC. The UreE protein probably delivers the nickel.</text>
</comment>
<comment type="subcellular location">
    <subcellularLocation>
        <location evidence="1">Cytoplasm</location>
    </subcellularLocation>
</comment>
<comment type="similarity">
    <text evidence="1">Belongs to the UreD family.</text>
</comment>
<evidence type="ECO:0000255" key="1">
    <source>
        <dbReference type="HAMAP-Rule" id="MF_01384"/>
    </source>
</evidence>